<name>Y1485_STAHJ</name>
<feature type="chain" id="PRO_0000164290" description="UPF0346 protein SH1485">
    <location>
        <begin position="1"/>
        <end position="73"/>
    </location>
</feature>
<gene>
    <name type="ordered locus">SH1485</name>
</gene>
<proteinExistence type="inferred from homology"/>
<organism>
    <name type="scientific">Staphylococcus haemolyticus (strain JCSC1435)</name>
    <dbReference type="NCBI Taxonomy" id="279808"/>
    <lineage>
        <taxon>Bacteria</taxon>
        <taxon>Bacillati</taxon>
        <taxon>Bacillota</taxon>
        <taxon>Bacilli</taxon>
        <taxon>Bacillales</taxon>
        <taxon>Staphylococcaceae</taxon>
        <taxon>Staphylococcus</taxon>
    </lineage>
</organism>
<dbReference type="EMBL" id="AP006716">
    <property type="protein sequence ID" value="BAE04794.1"/>
    <property type="molecule type" value="Genomic_DNA"/>
</dbReference>
<dbReference type="RefSeq" id="WP_011275780.1">
    <property type="nucleotide sequence ID" value="NC_007168.1"/>
</dbReference>
<dbReference type="SMR" id="Q4L6D1"/>
<dbReference type="KEGG" id="sha:SH1485"/>
<dbReference type="eggNOG" id="COG4479">
    <property type="taxonomic scope" value="Bacteria"/>
</dbReference>
<dbReference type="HOGENOM" id="CLU_177534_1_0_9"/>
<dbReference type="OrthoDB" id="2242851at2"/>
<dbReference type="Proteomes" id="UP000000543">
    <property type="component" value="Chromosome"/>
</dbReference>
<dbReference type="Gene3D" id="1.10.150.260">
    <property type="entry name" value="YozE SAM-like"/>
    <property type="match status" value="1"/>
</dbReference>
<dbReference type="HAMAP" id="MF_01538">
    <property type="entry name" value="UPF0346"/>
    <property type="match status" value="1"/>
</dbReference>
<dbReference type="InterPro" id="IPR010673">
    <property type="entry name" value="UPF0346"/>
</dbReference>
<dbReference type="InterPro" id="IPR023089">
    <property type="entry name" value="YozE_SAM-like"/>
</dbReference>
<dbReference type="InterPro" id="IPR036806">
    <property type="entry name" value="YozE_SAM-like_sf"/>
</dbReference>
<dbReference type="NCBIfam" id="NF010193">
    <property type="entry name" value="PRK13672.1"/>
    <property type="match status" value="1"/>
</dbReference>
<dbReference type="Pfam" id="PF06855">
    <property type="entry name" value="YozE_SAM_like"/>
    <property type="match status" value="1"/>
</dbReference>
<dbReference type="PIRSF" id="PIRSF037262">
    <property type="entry name" value="UCP037262"/>
    <property type="match status" value="1"/>
</dbReference>
<dbReference type="SUPFAM" id="SSF140652">
    <property type="entry name" value="YozE-like"/>
    <property type="match status" value="1"/>
</dbReference>
<evidence type="ECO:0000255" key="1">
    <source>
        <dbReference type="HAMAP-Rule" id="MF_01538"/>
    </source>
</evidence>
<accession>Q4L6D1</accession>
<protein>
    <recommendedName>
        <fullName evidence="1">UPF0346 protein SH1485</fullName>
    </recommendedName>
</protein>
<comment type="similarity">
    <text evidence="1">Belongs to the UPF0346 family.</text>
</comment>
<sequence length="73" mass="8823">MKEHSFYQFALTVRGRKDSKGDLAEEIFNDLSFPKHEKDFNQLSDYIEMQSDISVPMSEFDDLYEEYIEWLKF</sequence>
<reference key="1">
    <citation type="journal article" date="2005" name="J. Bacteriol.">
        <title>Whole-genome sequencing of Staphylococcus haemolyticus uncovers the extreme plasticity of its genome and the evolution of human-colonizing staphylococcal species.</title>
        <authorList>
            <person name="Takeuchi F."/>
            <person name="Watanabe S."/>
            <person name="Baba T."/>
            <person name="Yuzawa H."/>
            <person name="Ito T."/>
            <person name="Morimoto Y."/>
            <person name="Kuroda M."/>
            <person name="Cui L."/>
            <person name="Takahashi M."/>
            <person name="Ankai A."/>
            <person name="Baba S."/>
            <person name="Fukui S."/>
            <person name="Lee J.C."/>
            <person name="Hiramatsu K."/>
        </authorList>
    </citation>
    <scope>NUCLEOTIDE SEQUENCE [LARGE SCALE GENOMIC DNA]</scope>
    <source>
        <strain>JCSC1435</strain>
    </source>
</reference>